<keyword id="KW-0687">Ribonucleoprotein</keyword>
<keyword id="KW-0689">Ribosomal protein</keyword>
<evidence type="ECO:0000255" key="1">
    <source>
        <dbReference type="HAMAP-Rule" id="MF_00385"/>
    </source>
</evidence>
<evidence type="ECO:0000305" key="2"/>
<organism>
    <name type="scientific">Methylacidiphilum infernorum (isolate V4)</name>
    <name type="common">Methylokorus infernorum (strain V4)</name>
    <dbReference type="NCBI Taxonomy" id="481448"/>
    <lineage>
        <taxon>Bacteria</taxon>
        <taxon>Pseudomonadati</taxon>
        <taxon>Verrucomicrobiota</taxon>
        <taxon>Methylacidiphilae</taxon>
        <taxon>Methylacidiphilales</taxon>
        <taxon>Methylacidiphilaceae</taxon>
        <taxon>Methylacidiphilum (ex Ratnadevi et al. 2023)</taxon>
    </lineage>
</organism>
<gene>
    <name evidence="1" type="primary">rpsP</name>
    <name type="ordered locus">Minf_1276</name>
</gene>
<name>RS16_METI4</name>
<sequence>MAVVIRLRREGKKGRPQYRIVVADKRCPTNGKYIEEVGFYDPMVEAPQGYRLKLQRVSYWLKQGAKPTETVDQIIKKVSKLETKDN</sequence>
<feature type="chain" id="PRO_1000196430" description="Small ribosomal subunit protein bS16">
    <location>
        <begin position="1"/>
        <end position="86"/>
    </location>
</feature>
<dbReference type="EMBL" id="CP000975">
    <property type="protein sequence ID" value="ACD83330.1"/>
    <property type="molecule type" value="Genomic_DNA"/>
</dbReference>
<dbReference type="RefSeq" id="WP_012463612.1">
    <property type="nucleotide sequence ID" value="NC_010794.1"/>
</dbReference>
<dbReference type="SMR" id="B3DVH7"/>
<dbReference type="STRING" id="481448.Minf_1276"/>
<dbReference type="KEGG" id="min:Minf_1276"/>
<dbReference type="eggNOG" id="COG0228">
    <property type="taxonomic scope" value="Bacteria"/>
</dbReference>
<dbReference type="HOGENOM" id="CLU_100590_5_0_0"/>
<dbReference type="OrthoDB" id="9807878at2"/>
<dbReference type="Proteomes" id="UP000009149">
    <property type="component" value="Chromosome"/>
</dbReference>
<dbReference type="GO" id="GO:0005737">
    <property type="term" value="C:cytoplasm"/>
    <property type="evidence" value="ECO:0007669"/>
    <property type="project" value="UniProtKB-ARBA"/>
</dbReference>
<dbReference type="GO" id="GO:0015935">
    <property type="term" value="C:small ribosomal subunit"/>
    <property type="evidence" value="ECO:0007669"/>
    <property type="project" value="TreeGrafter"/>
</dbReference>
<dbReference type="GO" id="GO:0003735">
    <property type="term" value="F:structural constituent of ribosome"/>
    <property type="evidence" value="ECO:0007669"/>
    <property type="project" value="InterPro"/>
</dbReference>
<dbReference type="GO" id="GO:0006412">
    <property type="term" value="P:translation"/>
    <property type="evidence" value="ECO:0007669"/>
    <property type="project" value="UniProtKB-UniRule"/>
</dbReference>
<dbReference type="Gene3D" id="3.30.1320.10">
    <property type="match status" value="1"/>
</dbReference>
<dbReference type="HAMAP" id="MF_00385">
    <property type="entry name" value="Ribosomal_bS16"/>
    <property type="match status" value="1"/>
</dbReference>
<dbReference type="InterPro" id="IPR000307">
    <property type="entry name" value="Ribosomal_bS16"/>
</dbReference>
<dbReference type="InterPro" id="IPR023803">
    <property type="entry name" value="Ribosomal_bS16_dom_sf"/>
</dbReference>
<dbReference type="NCBIfam" id="TIGR00002">
    <property type="entry name" value="S16"/>
    <property type="match status" value="1"/>
</dbReference>
<dbReference type="PANTHER" id="PTHR12919">
    <property type="entry name" value="30S RIBOSOMAL PROTEIN S16"/>
    <property type="match status" value="1"/>
</dbReference>
<dbReference type="PANTHER" id="PTHR12919:SF20">
    <property type="entry name" value="SMALL RIBOSOMAL SUBUNIT PROTEIN BS16M"/>
    <property type="match status" value="1"/>
</dbReference>
<dbReference type="Pfam" id="PF00886">
    <property type="entry name" value="Ribosomal_S16"/>
    <property type="match status" value="1"/>
</dbReference>
<dbReference type="SUPFAM" id="SSF54565">
    <property type="entry name" value="Ribosomal protein S16"/>
    <property type="match status" value="1"/>
</dbReference>
<proteinExistence type="inferred from homology"/>
<accession>B3DVH7</accession>
<protein>
    <recommendedName>
        <fullName evidence="1">Small ribosomal subunit protein bS16</fullName>
    </recommendedName>
    <alternativeName>
        <fullName evidence="2">30S ribosomal protein S16</fullName>
    </alternativeName>
</protein>
<comment type="similarity">
    <text evidence="1">Belongs to the bacterial ribosomal protein bS16 family.</text>
</comment>
<reference key="1">
    <citation type="journal article" date="2008" name="Biol. Direct">
        <title>Complete genome sequence of the extremely acidophilic methanotroph isolate V4, Methylacidiphilum infernorum, a representative of the bacterial phylum Verrucomicrobia.</title>
        <authorList>
            <person name="Hou S."/>
            <person name="Makarova K.S."/>
            <person name="Saw J.H."/>
            <person name="Senin P."/>
            <person name="Ly B.V."/>
            <person name="Zhou Z."/>
            <person name="Ren Y."/>
            <person name="Wang J."/>
            <person name="Galperin M.Y."/>
            <person name="Omelchenko M.V."/>
            <person name="Wolf Y.I."/>
            <person name="Yutin N."/>
            <person name="Koonin E.V."/>
            <person name="Stott M.B."/>
            <person name="Mountain B.W."/>
            <person name="Crowe M.A."/>
            <person name="Smirnova A.V."/>
            <person name="Dunfield P.F."/>
            <person name="Feng L."/>
            <person name="Wang L."/>
            <person name="Alam M."/>
        </authorList>
    </citation>
    <scope>NUCLEOTIDE SEQUENCE [LARGE SCALE GENOMIC DNA]</scope>
    <source>
        <strain>Isolate V4</strain>
    </source>
</reference>